<name>OMP1_IGNH4</name>
<keyword id="KW-0998">Cell outer membrane</keyword>
<keyword id="KW-0903">Direct protein sequencing</keyword>
<keyword id="KW-0472">Membrane</keyword>
<keyword id="KW-1185">Reference proteome</keyword>
<keyword id="KW-0732">Signal</keyword>
<keyword id="KW-0812">Transmembrane</keyword>
<keyword id="KW-1133">Transmembrane helix</keyword>
<proteinExistence type="evidence at protein level"/>
<comment type="function">
    <text>The most abundant protein of the outer membrane, it forms a pore through it.</text>
</comment>
<comment type="subunit">
    <text evidence="2">Forms extremely stable complexes with apparent masses of 150, 50, 45 and 38 kDa. Found in a ring-shaped complex of 7 nm diameter with a 2 nm channel through the middle. Complete denaturation requires temperatures over 110 degrees Celsius.</text>
</comment>
<comment type="subcellular location">
    <subcellularLocation>
        <location evidence="4 5">Cell outer membrane</location>
        <topology evidence="4 5">Single-pass membrane protein</topology>
    </subcellularLocation>
</comment>
<comment type="miscellaneous">
    <text>Ignicoccus hospitalis is unique in having an energized outer membrane while ATP synthesis occurs within the periplasmic space.</text>
</comment>
<organism>
    <name type="scientific">Ignicoccus hospitalis (strain KIN4/I / DSM 18386 / JCM 14125)</name>
    <dbReference type="NCBI Taxonomy" id="453591"/>
    <lineage>
        <taxon>Archaea</taxon>
        <taxon>Thermoproteota</taxon>
        <taxon>Thermoprotei</taxon>
        <taxon>Desulfurococcales</taxon>
        <taxon>Desulfurococcaceae</taxon>
        <taxon>Ignicoccus</taxon>
    </lineage>
</organism>
<gene>
    <name type="primary">ihomp1</name>
    <name type="synonym">imp1227</name>
    <name type="ordered locus">Igni_1266</name>
</gene>
<protein>
    <recommendedName>
        <fullName>Major outer membrane protein 1</fullName>
        <shortName>Ihomp1</shortName>
    </recommendedName>
    <alternativeName>
        <fullName>Outer membrane protein Imp1227</fullName>
    </alternativeName>
</protein>
<dbReference type="EMBL" id="CP000816">
    <property type="protein sequence ID" value="ABU82442.1"/>
    <property type="molecule type" value="Genomic_DNA"/>
</dbReference>
<dbReference type="RefSeq" id="WP_012123406.1">
    <property type="nucleotide sequence ID" value="NC_009776.1"/>
</dbReference>
<dbReference type="STRING" id="453591.Igni_1266"/>
<dbReference type="TCDB" id="1.A.63.1.1">
    <property type="family name" value="the ignicoccus outer membrane Alpha-helical porin (i-omp) family"/>
</dbReference>
<dbReference type="GeneID" id="5562471"/>
<dbReference type="KEGG" id="iho:Igni_1266"/>
<dbReference type="HOGENOM" id="CLU_2504911_0_0_2"/>
<dbReference type="Proteomes" id="UP000000262">
    <property type="component" value="Chromosome"/>
</dbReference>
<dbReference type="GO" id="GO:0016020">
    <property type="term" value="C:membrane"/>
    <property type="evidence" value="ECO:0007669"/>
    <property type="project" value="UniProtKB-KW"/>
</dbReference>
<evidence type="ECO:0000255" key="1"/>
<evidence type="ECO:0000269" key="2">
    <source>
    </source>
</evidence>
<evidence type="ECO:0000269" key="3">
    <source>
    </source>
</evidence>
<evidence type="ECO:0000305" key="4">
    <source>
    </source>
</evidence>
<evidence type="ECO:0000305" key="5">
    <source>
    </source>
</evidence>
<sequence>MEAREVEEMRRSRLLTLGGIGYTAVIALAALVLVMGALGLVLKVAAAAGALPSEVAKVANALPGLKASVDANPAAGSLSSVSVST</sequence>
<reference key="1">
    <citation type="journal article" date="2008" name="Genome Biol.">
        <title>A genomic analysis of the archaeal system Ignicoccus hospitalis-Nanoarchaeum equitans.</title>
        <authorList>
            <person name="Podar M."/>
            <person name="Anderson I."/>
            <person name="Makarova K.S."/>
            <person name="Elkins J.G."/>
            <person name="Ivanova N."/>
            <person name="Wall M.A."/>
            <person name="Lykidis A."/>
            <person name="Mavromatis K."/>
            <person name="Sun H."/>
            <person name="Hudson M.E."/>
            <person name="Chen W."/>
            <person name="Deciu C."/>
            <person name="Hutchison D."/>
            <person name="Eads J.R."/>
            <person name="Anderson A."/>
            <person name="Fernandes F."/>
            <person name="Szeto E."/>
            <person name="Lapidus A."/>
            <person name="Kyrpides N.C."/>
            <person name="Saier M.H. Jr."/>
            <person name="Richardson P.M."/>
            <person name="Rachel R."/>
            <person name="Huber H."/>
            <person name="Eisen J.A."/>
            <person name="Koonin E.V."/>
            <person name="Keller M."/>
            <person name="Stetter K.O."/>
        </authorList>
    </citation>
    <scope>NUCLEOTIDE SEQUENCE [LARGE SCALE GENOMIC DNA]</scope>
    <source>
        <strain>KIN4/I / DSM 18386 / JCM 14125</strain>
    </source>
</reference>
<reference key="2">
    <citation type="journal article" date="2008" name="Arch. Microbiol.">
        <title>Insight into the proteome of the hyperthermophilic Crenarchaeon Ignicoccus hospitalis: the major cytosolic and membrane proteins.</title>
        <authorList>
            <person name="Burghardt T."/>
            <person name="Saller M."/>
            <person name="Gurster S."/>
            <person name="Muller D."/>
            <person name="Meyer C."/>
            <person name="Jahn U."/>
            <person name="Hochmuth E."/>
            <person name="Deutzmann R."/>
            <person name="Siedler F."/>
            <person name="Babinger P."/>
            <person name="Wirth R."/>
            <person name="Huber H."/>
            <person name="Rachel R."/>
        </authorList>
    </citation>
    <scope>PROTEIN SEQUENCE OF 19-31</scope>
    <scope>SUBCELLULAR LOCATION</scope>
    <source>
        <strain>KIN4/I / DSM 18386 / JCM 14125</strain>
    </source>
</reference>
<reference key="3">
    <citation type="journal article" date="2007" name="Mol. Microbiol.">
        <title>The dominating outer membrane protein of the hyperthermophilic Archaeum Ignicoccus hospitalis: a novel pore-forming complex.</title>
        <authorList>
            <person name="Burghardt T."/>
            <person name="Nather D.J."/>
            <person name="Junglas B."/>
            <person name="Huber H."/>
            <person name="Rachel R."/>
        </authorList>
    </citation>
    <scope>PROTEIN SEQUENCE OF 19-28</scope>
    <scope>SUBCELLULAR LOCATION</scope>
    <scope>SUBUNIT</scope>
    <source>
        <strain>KIN4/I / DSM 18386 / JCM 14125</strain>
    </source>
</reference>
<accession>A8ABZ0</accession>
<feature type="signal peptide" evidence="2 3">
    <location>
        <begin position="1"/>
        <end position="18"/>
    </location>
</feature>
<feature type="chain" id="PRO_0000415942" description="Major outer membrane protein 1">
    <location>
        <begin position="19"/>
        <end position="85"/>
    </location>
</feature>
<feature type="transmembrane region" description="Helical" evidence="1">
    <location>
        <begin position="22"/>
        <end position="42"/>
    </location>
</feature>